<protein>
    <recommendedName>
        <fullName evidence="5">Glycerol-3-phosphate acyltransferase ATS11, chloroplastic</fullName>
        <shortName evidence="5">G3PAT</shortName>
        <shortName evidence="4">GPAT</shortName>
        <ecNumber evidence="5">2.3.1.15</ecNumber>
        <ecNumber evidence="3">2.3.1.n5</ecNumber>
    </recommendedName>
</protein>
<gene>
    <name evidence="4" type="primary">ATS1;1</name>
    <name evidence="5" type="synonym">AT1</name>
</gene>
<accession>Q9FEQ0</accession>
<sequence length="447" mass="49288">MFILSSSSSLPSPLSLSSSRVSLPPPSSSSLNLLPLSPHFQPPNLACSCSVASRSTAELLHDFKHSAHTAASADEARNHLPHSRAFLDVRSEQELLSYIRREAEAGKLPSNVAAGMEELYQNYKNAVLKSGNPKADEIVLSNMTVALDRILLDVEEPFVFSPHHKAVREPFDYYTFGQNYVRPLIDFGNSFVGNPFLFKDIEEKLHQGHNVVLISNHQTEADPAIISLLLEKTSPYIAENMIYVAGDRVIVDPLCKPFSIGRNLICVYSKKHMFDIPELAETKRKANTRSLKEMALLLRGGSQLIWIAPSGGRDRLDPSSGEWLPAPFDASSMDNMRRLIQHSGVPGHLCPLALLCYDIMPPPSKVEIEIGEKRVISFNGVGLSLAPAISFEAIAATHRNPDEAREAYSKALFDSVSMQYNVLKAAIYGRQALRASTADVSLSQPWI</sequence>
<proteinExistence type="evidence at protein level"/>
<evidence type="ECO:0000255" key="1"/>
<evidence type="ECO:0000256" key="2">
    <source>
        <dbReference type="SAM" id="MobiDB-lite"/>
    </source>
</evidence>
<evidence type="ECO:0000269" key="3">
    <source ref="2"/>
</evidence>
<evidence type="ECO:0000303" key="4">
    <source>
    </source>
</evidence>
<evidence type="ECO:0000305" key="5"/>
<evidence type="ECO:0000305" key="6">
    <source ref="2"/>
</evidence>
<reference key="1">
    <citation type="journal article" date="2000" name="Plant Cell Physiol.">
        <title>A second gene for acyl-(acyl-carrier-protein): glycerol-3-phosphate acyltransferase in squash, Cucurbita moschata cv. Shirogikuza(*), codes for an oleate-selective isozyme: molecular cloning and protein purification studies.</title>
        <authorList>
            <person name="Nishida I."/>
            <person name="Sugiura M."/>
            <person name="Enju A."/>
            <person name="Nakamura M."/>
        </authorList>
    </citation>
    <scope>NUCLEOTIDE SEQUENCE [GENOMIC DNA / MRNA]</scope>
    <scope>PARTIAL PROTEIN SEQUENCE</scope>
</reference>
<reference key="2">
    <citation type="journal article" date="1987" name="Plant Cell Physiol.">
        <title>Properties of the plastidial acyl-(acyl-carrier-protein): glycerol-3-phosphate acyltransferase from the chilling-sensitive plant squash (Cucurbita moschata).</title>
        <authorList>
            <person name="Frentzen M."/>
            <person name="Nishida I."/>
            <person name="Murata N."/>
        </authorList>
    </citation>
    <scope>FUNCTION</scope>
    <scope>CATALYTIC ACTIVITY</scope>
</reference>
<feature type="transit peptide" description="Chloroplast" evidence="1">
    <location>
        <begin position="1"/>
        <end position="48"/>
    </location>
</feature>
<feature type="chain" id="PRO_0000447695" description="Glycerol-3-phosphate acyltransferase ATS11, chloroplastic">
    <location>
        <begin position="49"/>
        <end position="447"/>
    </location>
</feature>
<feature type="region of interest" description="Disordered" evidence="2">
    <location>
        <begin position="1"/>
        <end position="21"/>
    </location>
</feature>
<feature type="short sequence motif" description="HXXXXD motif">
    <location>
        <begin position="217"/>
        <end position="222"/>
    </location>
</feature>
<keyword id="KW-0012">Acyltransferase</keyword>
<keyword id="KW-0150">Chloroplast</keyword>
<keyword id="KW-0903">Direct protein sequencing</keyword>
<keyword id="KW-0444">Lipid biosynthesis</keyword>
<keyword id="KW-0443">Lipid metabolism</keyword>
<keyword id="KW-0594">Phospholipid biosynthesis</keyword>
<keyword id="KW-1208">Phospholipid metabolism</keyword>
<keyword id="KW-0934">Plastid</keyword>
<keyword id="KW-0808">Transferase</keyword>
<keyword id="KW-0809">Transit peptide</keyword>
<name>GPAT1_CUCMO</name>
<organism>
    <name type="scientific">Cucurbita moschata</name>
    <name type="common">Winter crookneck squash</name>
    <name type="synonym">Cucurbita pepo var. moschata</name>
    <dbReference type="NCBI Taxonomy" id="3662"/>
    <lineage>
        <taxon>Eukaryota</taxon>
        <taxon>Viridiplantae</taxon>
        <taxon>Streptophyta</taxon>
        <taxon>Embryophyta</taxon>
        <taxon>Tracheophyta</taxon>
        <taxon>Spermatophyta</taxon>
        <taxon>Magnoliopsida</taxon>
        <taxon>eudicotyledons</taxon>
        <taxon>Gunneridae</taxon>
        <taxon>Pentapetalae</taxon>
        <taxon>rosids</taxon>
        <taxon>fabids</taxon>
        <taxon>Cucurbitales</taxon>
        <taxon>Cucurbitaceae</taxon>
        <taxon>Cucurbiteae</taxon>
        <taxon>Cucurbita</taxon>
    </lineage>
</organism>
<dbReference type="EC" id="2.3.1.15" evidence="5"/>
<dbReference type="EC" id="2.3.1.n5" evidence="3"/>
<dbReference type="EMBL" id="AB042400">
    <property type="protein sequence ID" value="BAB17754.1"/>
    <property type="molecule type" value="mRNA"/>
</dbReference>
<dbReference type="EMBL" id="AB049134">
    <property type="protein sequence ID" value="BAB39688.1"/>
    <property type="molecule type" value="Genomic_DNA"/>
</dbReference>
<dbReference type="SMR" id="Q9FEQ0"/>
<dbReference type="BRENDA" id="2.3.1.15">
    <property type="organism ID" value="1739"/>
</dbReference>
<dbReference type="UniPathway" id="UPA00557">
    <property type="reaction ID" value="UER00612"/>
</dbReference>
<dbReference type="Proteomes" id="UP000504609">
    <property type="component" value="Unplaced"/>
</dbReference>
<dbReference type="GO" id="GO:0009570">
    <property type="term" value="C:chloroplast stroma"/>
    <property type="evidence" value="ECO:0007669"/>
    <property type="project" value="UniProtKB-SubCell"/>
</dbReference>
<dbReference type="GO" id="GO:0004366">
    <property type="term" value="F:glycerol-3-phosphate O-acyltransferase activity"/>
    <property type="evidence" value="ECO:0007669"/>
    <property type="project" value="UniProtKB-EC"/>
</dbReference>
<dbReference type="GO" id="GO:0016024">
    <property type="term" value="P:CDP-diacylglycerol biosynthetic process"/>
    <property type="evidence" value="ECO:0007669"/>
    <property type="project" value="UniProtKB-UniPathway"/>
</dbReference>
<dbReference type="GO" id="GO:0006655">
    <property type="term" value="P:phosphatidylglycerol biosynthetic process"/>
    <property type="evidence" value="ECO:0007669"/>
    <property type="project" value="TreeGrafter"/>
</dbReference>
<dbReference type="CDD" id="cd07985">
    <property type="entry name" value="LPLAT_GPAT"/>
    <property type="match status" value="1"/>
</dbReference>
<dbReference type="Gene3D" id="3.40.1130.10">
    <property type="entry name" value="Glycerol-3-phosphate (1)-acyltransferase"/>
    <property type="match status" value="1"/>
</dbReference>
<dbReference type="Gene3D" id="1.10.1200.50">
    <property type="entry name" value="Glycerol-3-phosphate acyltransferase, alpha helical bundle, N-terminal"/>
    <property type="match status" value="1"/>
</dbReference>
<dbReference type="InterPro" id="IPR016222">
    <property type="entry name" value="G3P_O-acylTrfase_chlp"/>
</dbReference>
<dbReference type="InterPro" id="IPR023083">
    <property type="entry name" value="G3P_O-acylTrfase_N"/>
</dbReference>
<dbReference type="InterPro" id="IPR038114">
    <property type="entry name" value="GPAT_N_sf"/>
</dbReference>
<dbReference type="InterPro" id="IPR002123">
    <property type="entry name" value="Plipid/glycerol_acylTrfase"/>
</dbReference>
<dbReference type="PANTHER" id="PTHR35695">
    <property type="entry name" value="GLYCEROL-3-PHOSPHATE ACYLTRANSFERASE, CHLOROPLASTIC"/>
    <property type="match status" value="1"/>
</dbReference>
<dbReference type="PANTHER" id="PTHR35695:SF1">
    <property type="entry name" value="GLYCEROL-3-PHOSPHATE ACYLTRANSFERASE, CHLOROPLASTIC"/>
    <property type="match status" value="1"/>
</dbReference>
<dbReference type="Pfam" id="PF01553">
    <property type="entry name" value="Acyltransferase"/>
    <property type="match status" value="1"/>
</dbReference>
<dbReference type="Pfam" id="PF14829">
    <property type="entry name" value="GPAT_N"/>
    <property type="match status" value="1"/>
</dbReference>
<dbReference type="PIRSF" id="PIRSF000431">
    <property type="entry name" value="Glycerol-3-P_O-acyltransfrase"/>
    <property type="match status" value="1"/>
</dbReference>
<dbReference type="SMART" id="SM00563">
    <property type="entry name" value="PlsC"/>
    <property type="match status" value="1"/>
</dbReference>
<dbReference type="SUPFAM" id="SSF69593">
    <property type="entry name" value="Glycerol-3-phosphate (1)-acyltransferase"/>
    <property type="match status" value="1"/>
</dbReference>
<comment type="function">
    <text evidence="3 5 6">Esterifies the acyl-group from acyl-acyl carrier proteins (acyl-ACPs) to the sn-1 position of glycerol-3-phosphate (Ref.2). The physiological acyl donors in chloroplasts are acyl-ACPs, but acyl-CoAs are used as artificial donor for in vitro reactions (Probable). The enzyme from chilling-resistant plants discriminates against non-fluid palmitic acid and selects oleic acid whereas the enzyme from sensitive plants accepts both fatty acids (Ref.2). Squash is chilling-sensitive (Probable). Preferably utilizes oleoyl groups (18:1-ACP) and has lower affinity to palmitoyl (16:0-ACP) and stearoyl groups (18:0-ACP) (Ref.2).</text>
</comment>
<comment type="catalytic activity">
    <reaction evidence="3">
        <text>a fatty acyl-[ACP] + sn-glycerol 3-phosphate = a 1-acyl-sn-glycero-3-phosphate + holo-[ACP]</text>
        <dbReference type="Rhea" id="RHEA:42300"/>
        <dbReference type="Rhea" id="RHEA-COMP:9685"/>
        <dbReference type="Rhea" id="RHEA-COMP:14125"/>
        <dbReference type="ChEBI" id="CHEBI:57597"/>
        <dbReference type="ChEBI" id="CHEBI:57970"/>
        <dbReference type="ChEBI" id="CHEBI:64479"/>
        <dbReference type="ChEBI" id="CHEBI:138651"/>
        <dbReference type="EC" id="2.3.1.n5"/>
    </reaction>
    <physiologicalReaction direction="left-to-right" evidence="5">
        <dbReference type="Rhea" id="RHEA:42301"/>
    </physiologicalReaction>
</comment>
<comment type="catalytic activity">
    <reaction evidence="5">
        <text>sn-glycerol 3-phosphate + an acyl-CoA = a 1-acyl-sn-glycero-3-phosphate + CoA</text>
        <dbReference type="Rhea" id="RHEA:15325"/>
        <dbReference type="ChEBI" id="CHEBI:57287"/>
        <dbReference type="ChEBI" id="CHEBI:57597"/>
        <dbReference type="ChEBI" id="CHEBI:57970"/>
        <dbReference type="ChEBI" id="CHEBI:58342"/>
        <dbReference type="EC" id="2.3.1.15"/>
    </reaction>
    <physiologicalReaction direction="left-to-right" evidence="5">
        <dbReference type="Rhea" id="RHEA:15326"/>
    </physiologicalReaction>
</comment>
<comment type="pathway">
    <text evidence="5">Phospholipid metabolism; CDP-diacylglycerol biosynthesis; CDP-diacylglycerol from sn-glycerol 3-phosphate: step 1/3.</text>
</comment>
<comment type="subcellular location">
    <subcellularLocation>
        <location evidence="5">Plastid</location>
        <location evidence="5">Chloroplast stroma</location>
    </subcellularLocation>
</comment>
<comment type="domain">
    <text evidence="5">The HXXXXD motif is essential for acyltransferase activity and may constitute the binding site for the phosphate moiety of the glycerol-3-phosphate.</text>
</comment>
<comment type="similarity">
    <text evidence="5">Belongs to the GPAT/DAPAT family.</text>
</comment>